<sequence length="12" mass="1191">XIGAGATSKLVY</sequence>
<comment type="catalytic activity">
    <reaction evidence="1 2 3">
        <text>a 1,2-diacyl-sn-glycero-3-phosphocholine + H2O = a 1-acyl-sn-glycero-3-phosphocholine + a fatty acid + H(+)</text>
        <dbReference type="Rhea" id="RHEA:15801"/>
        <dbReference type="ChEBI" id="CHEBI:15377"/>
        <dbReference type="ChEBI" id="CHEBI:15378"/>
        <dbReference type="ChEBI" id="CHEBI:28868"/>
        <dbReference type="ChEBI" id="CHEBI:57643"/>
        <dbReference type="ChEBI" id="CHEBI:58168"/>
        <dbReference type="EC" id="3.1.1.4"/>
    </reaction>
</comment>
<comment type="cofactor">
    <cofactor evidence="3">
        <name>Ca(2+)</name>
        <dbReference type="ChEBI" id="CHEBI:29108"/>
    </cofactor>
    <text evidence="3">Binds 1 Ca(2+) ion per subunit.</text>
</comment>
<comment type="biophysicochemical properties">
    <kinetics>
        <KM evidence="3">40 mM for phosphatidylcholine (in the presence of 8 mM NaDC and 10 mM CaCl(2), at 50 degrees Celsius and pH 8)</KM>
        <Vmax evidence="3">50.0 umol/min/mg enzyme toward phosphatidylcholine (in the presence of 8 mM NaDC and 10 mM CaCl(2), at 50 degrees Celsius and pH 8)</Vmax>
    </kinetics>
    <phDependence>
        <text evidence="3">Optimum pH is 8.0. Stable between pH 6.0 and 9.0.</text>
    </phDependence>
    <temperatureDependence>
        <text evidence="3">Optimum temperature is 50 degrees Celsius. No activity at temperatures below 25 degrees Celsius or above 60 degrees Celsius.</text>
    </temperatureDependence>
</comment>
<comment type="similarity">
    <text evidence="3">Belongs to the phospholipase A2 family.</text>
</comment>
<feature type="chain" id="PRO_0000394410" description="Phospholipase A2">
    <location>
        <begin position="1"/>
        <end position="12" status="greater than"/>
    </location>
</feature>
<feature type="non-terminal residue" evidence="4">
    <location>
        <position position="12"/>
    </location>
</feature>
<proteinExistence type="evidence at protein level"/>
<keyword id="KW-0106">Calcium</keyword>
<keyword id="KW-0903">Direct protein sequencing</keyword>
<keyword id="KW-0378">Hydrolase</keyword>
<keyword id="KW-0442">Lipid degradation</keyword>
<keyword id="KW-0443">Lipid metabolism</keyword>
<keyword id="KW-0479">Metal-binding</keyword>
<name>PA2_CARAE</name>
<accession>P86517</accession>
<evidence type="ECO:0000255" key="1">
    <source>
        <dbReference type="PROSITE-ProRule" id="PRU10035"/>
    </source>
</evidence>
<evidence type="ECO:0000255" key="2">
    <source>
        <dbReference type="PROSITE-ProRule" id="PRU10036"/>
    </source>
</evidence>
<evidence type="ECO:0000269" key="3">
    <source>
    </source>
</evidence>
<evidence type="ECO:0000303" key="4">
    <source>
    </source>
</evidence>
<evidence type="ECO:0000305" key="5"/>
<reference evidence="5" key="1">
    <citation type="journal article" date="2010" name="Bioresour. Technol.">
        <title>Crab digestive phospholipase: a new invertebrate member.</title>
        <authorList>
            <person name="Cherif S."/>
            <person name="Ben Bacha A."/>
            <person name="Ben Ali Y."/>
            <person name="Horchani H."/>
            <person name="Rekik W."/>
            <person name="Gargouri Y."/>
        </authorList>
    </citation>
    <scope>PROTEIN SEQUENCE</scope>
    <scope>CATALYTIC ACTIVITY</scope>
    <scope>COFACTOR</scope>
    <scope>BIOPHYSICOCHEMICAL PROPERTIES</scope>
    <source>
        <tissue evidence="3">Hepatopancreas</tissue>
    </source>
</reference>
<protein>
    <recommendedName>
        <fullName evidence="4">Phospholipase A2</fullName>
        <ecNumber>3.1.1.4</ecNumber>
    </recommendedName>
</protein>
<dbReference type="EC" id="3.1.1.4"/>
<dbReference type="GO" id="GO:0005509">
    <property type="term" value="F:calcium ion binding"/>
    <property type="evidence" value="ECO:0000314"/>
    <property type="project" value="UniProtKB"/>
</dbReference>
<dbReference type="GO" id="GO:0004623">
    <property type="term" value="F:phospholipase A2 activity"/>
    <property type="evidence" value="ECO:0000314"/>
    <property type="project" value="UniProtKB"/>
</dbReference>
<dbReference type="GO" id="GO:0016042">
    <property type="term" value="P:lipid catabolic process"/>
    <property type="evidence" value="ECO:0007669"/>
    <property type="project" value="UniProtKB-KW"/>
</dbReference>
<organism>
    <name type="scientific">Carcinus aestuarii</name>
    <name type="common">Green crab</name>
    <name type="synonym">Carcinus mediterraneus</name>
    <dbReference type="NCBI Taxonomy" id="53602"/>
    <lineage>
        <taxon>Eukaryota</taxon>
        <taxon>Metazoa</taxon>
        <taxon>Ecdysozoa</taxon>
        <taxon>Arthropoda</taxon>
        <taxon>Crustacea</taxon>
        <taxon>Multicrustacea</taxon>
        <taxon>Malacostraca</taxon>
        <taxon>Eumalacostraca</taxon>
        <taxon>Eucarida</taxon>
        <taxon>Decapoda</taxon>
        <taxon>Pleocyemata</taxon>
        <taxon>Brachyura</taxon>
        <taxon>Eubrachyura</taxon>
        <taxon>Portunoidea</taxon>
        <taxon>Carcinidae</taxon>
        <taxon>Carcinus</taxon>
    </lineage>
</organism>